<evidence type="ECO:0000250" key="1">
    <source>
        <dbReference type="UniProtKB" id="P03901"/>
    </source>
</evidence>
<evidence type="ECO:0000250" key="2">
    <source>
        <dbReference type="UniProtKB" id="P03902"/>
    </source>
</evidence>
<evidence type="ECO:0000255" key="3"/>
<evidence type="ECO:0000305" key="4"/>
<dbReference type="EC" id="7.1.1.2"/>
<dbReference type="EMBL" id="U83818">
    <property type="protein sequence ID" value="AAB87170.1"/>
    <property type="molecule type" value="Genomic_DNA"/>
</dbReference>
<dbReference type="SMR" id="O21783"/>
<dbReference type="GO" id="GO:0005743">
    <property type="term" value="C:mitochondrial inner membrane"/>
    <property type="evidence" value="ECO:0000250"/>
    <property type="project" value="UniProtKB"/>
</dbReference>
<dbReference type="GO" id="GO:0045271">
    <property type="term" value="C:respiratory chain complex I"/>
    <property type="evidence" value="ECO:0000250"/>
    <property type="project" value="UniProtKB"/>
</dbReference>
<dbReference type="GO" id="GO:0008137">
    <property type="term" value="F:NADH dehydrogenase (ubiquinone) activity"/>
    <property type="evidence" value="ECO:0000250"/>
    <property type="project" value="UniProtKB"/>
</dbReference>
<dbReference type="GO" id="GO:0042773">
    <property type="term" value="P:ATP synthesis coupled electron transport"/>
    <property type="evidence" value="ECO:0007669"/>
    <property type="project" value="InterPro"/>
</dbReference>
<dbReference type="FunFam" id="1.10.287.3510:FF:000002">
    <property type="entry name" value="NADH-ubiquinone oxidoreductase chain 4L"/>
    <property type="match status" value="1"/>
</dbReference>
<dbReference type="Gene3D" id="1.10.287.3510">
    <property type="match status" value="1"/>
</dbReference>
<dbReference type="InterPro" id="IPR001133">
    <property type="entry name" value="NADH_UbQ_OxRdtase_chain4L/K"/>
</dbReference>
<dbReference type="InterPro" id="IPR039428">
    <property type="entry name" value="NUOK/Mnh_C1-like"/>
</dbReference>
<dbReference type="PANTHER" id="PTHR11434:SF0">
    <property type="entry name" value="NADH-UBIQUINONE OXIDOREDUCTASE CHAIN 4L"/>
    <property type="match status" value="1"/>
</dbReference>
<dbReference type="PANTHER" id="PTHR11434">
    <property type="entry name" value="NADH-UBIQUINONE OXIDOREDUCTASE SUBUNIT ND4L"/>
    <property type="match status" value="1"/>
</dbReference>
<dbReference type="Pfam" id="PF00420">
    <property type="entry name" value="Oxidored_q2"/>
    <property type="match status" value="1"/>
</dbReference>
<reference key="1">
    <citation type="journal article" date="1998" name="Mol. Biol. Evol.">
        <title>Molecular systematics and paleobiogeography of the South American sigmodontine rodents.</title>
        <authorList>
            <person name="Engel S.R."/>
            <person name="Hogan K.M."/>
            <person name="Taylor J.F."/>
            <person name="Davis S.K."/>
        </authorList>
    </citation>
    <scope>NUCLEOTIDE SEQUENCE [GENOMIC DNA]</scope>
</reference>
<proteinExistence type="inferred from homology"/>
<name>NU4LM_CALLC</name>
<geneLocation type="mitochondrion"/>
<sequence length="98" mass="10743">MTQASTNILLAFFFSLLGTLIFRSHLMSTLLCLEGMMLTLFIMSTMTALNSQSTVMYTIPIVMLVFAACEAAIGLALLAMISNTYGTDYVQNLNLLQC</sequence>
<accession>O21783</accession>
<feature type="chain" id="PRO_0000257865" description="NADH-ubiquinone oxidoreductase chain 4L">
    <location>
        <begin position="1"/>
        <end position="98"/>
    </location>
</feature>
<feature type="transmembrane region" description="Helical" evidence="3">
    <location>
        <begin position="2"/>
        <end position="22"/>
    </location>
</feature>
<feature type="transmembrane region" description="Helical" evidence="3">
    <location>
        <begin position="29"/>
        <end position="49"/>
    </location>
</feature>
<feature type="transmembrane region" description="Helical" evidence="3">
    <location>
        <begin position="61"/>
        <end position="81"/>
    </location>
</feature>
<gene>
    <name type="primary">MT-ND4L</name>
    <name type="synonym">MTND4L</name>
    <name type="synonym">NADH4L</name>
    <name type="synonym">ND4L</name>
</gene>
<organism>
    <name type="scientific">Calomys laucha</name>
    <name type="common">Small vesper mouse</name>
    <dbReference type="NCBI Taxonomy" id="56211"/>
    <lineage>
        <taxon>Eukaryota</taxon>
        <taxon>Metazoa</taxon>
        <taxon>Chordata</taxon>
        <taxon>Craniata</taxon>
        <taxon>Vertebrata</taxon>
        <taxon>Euteleostomi</taxon>
        <taxon>Mammalia</taxon>
        <taxon>Eutheria</taxon>
        <taxon>Euarchontoglires</taxon>
        <taxon>Glires</taxon>
        <taxon>Rodentia</taxon>
        <taxon>Myomorpha</taxon>
        <taxon>Muroidea</taxon>
        <taxon>Cricetidae</taxon>
        <taxon>Sigmodontinae</taxon>
        <taxon>Calomys</taxon>
    </lineage>
</organism>
<keyword id="KW-0249">Electron transport</keyword>
<keyword id="KW-0472">Membrane</keyword>
<keyword id="KW-0496">Mitochondrion</keyword>
<keyword id="KW-0999">Mitochondrion inner membrane</keyword>
<keyword id="KW-0520">NAD</keyword>
<keyword id="KW-0679">Respiratory chain</keyword>
<keyword id="KW-1278">Translocase</keyword>
<keyword id="KW-0812">Transmembrane</keyword>
<keyword id="KW-1133">Transmembrane helix</keyword>
<keyword id="KW-0813">Transport</keyword>
<keyword id="KW-0830">Ubiquinone</keyword>
<protein>
    <recommendedName>
        <fullName>NADH-ubiquinone oxidoreductase chain 4L</fullName>
        <ecNumber>7.1.1.2</ecNumber>
    </recommendedName>
    <alternativeName>
        <fullName>NADH dehydrogenase subunit 4L</fullName>
    </alternativeName>
</protein>
<comment type="function">
    <text evidence="1">Core subunit of the mitochondrial membrane respiratory chain NADH dehydrogenase (Complex I) which catalyzes electron transfer from NADH through the respiratory chain, using ubiquinone as an electron acceptor. Part of the enzyme membrane arm which is embedded in the lipid bilayer and involved in proton translocation.</text>
</comment>
<comment type="catalytic activity">
    <reaction evidence="1">
        <text>a ubiquinone + NADH + 5 H(+)(in) = a ubiquinol + NAD(+) + 4 H(+)(out)</text>
        <dbReference type="Rhea" id="RHEA:29091"/>
        <dbReference type="Rhea" id="RHEA-COMP:9565"/>
        <dbReference type="Rhea" id="RHEA-COMP:9566"/>
        <dbReference type="ChEBI" id="CHEBI:15378"/>
        <dbReference type="ChEBI" id="CHEBI:16389"/>
        <dbReference type="ChEBI" id="CHEBI:17976"/>
        <dbReference type="ChEBI" id="CHEBI:57540"/>
        <dbReference type="ChEBI" id="CHEBI:57945"/>
        <dbReference type="EC" id="7.1.1.2"/>
    </reaction>
    <physiologicalReaction direction="left-to-right" evidence="1">
        <dbReference type="Rhea" id="RHEA:29092"/>
    </physiologicalReaction>
</comment>
<comment type="subunit">
    <text evidence="2">Core subunit of respiratory chain NADH dehydrogenase (Complex I) which is composed of 45 different subunits.</text>
</comment>
<comment type="subcellular location">
    <subcellularLocation>
        <location evidence="2">Mitochondrion inner membrane</location>
        <topology evidence="3">Multi-pass membrane protein</topology>
    </subcellularLocation>
</comment>
<comment type="similarity">
    <text evidence="4">Belongs to the complex I subunit 4L family.</text>
</comment>